<gene>
    <name evidence="1" type="primary">alaS</name>
    <name type="ordered locus">APJL_0644</name>
</gene>
<evidence type="ECO:0000255" key="1">
    <source>
        <dbReference type="HAMAP-Rule" id="MF_00036"/>
    </source>
</evidence>
<sequence>MKTTSEIRQSFLDFFHSKGHTVVPSSSLVPENDPTLLFTNAGMNQFKDVFLGLEKRPYTRATTAQRCVRAGGKHNDLENVGYTARHHTFFEMMGNFSFGDYFKHDAIQFGWEYLTSPQWLGLPKEKLYVTVYETDDEAYDIWNKIVGVPTDHIIRIGDNKGAPYASDNFWAMGDTGPCGPCTEIFYDHGETFWGGLPGSPEEDGDRYIEVWNIVFMQFNRLADGTMEKLPKPSVDTGMGLERMTAVMQHVNSNYETDIFQTLIKEVAGLLNVSDLDNKSLRVVADHIRACSYLIADGVVPSNEGRGYVLRRIIRRAVRHGNLLGAKEAFFYKLVPTLATVMGHAGEVLTQKQAHIQKTLKAEEEQFARTLERGLALLEDALTKVENNTLSGEVAFKLYDTYGFPLDLTADVCRERELTIDEAGFEAEMTAQRERAKASSNFGTDYNNVIKVEGQTDFIGYDNLEAQATIVGLFSNGKAVDTIQSGESAVIILDQTPFYAEMGGQVGDSGLISTEICNFTVNDTQKYGQVFGHIGQLTSGSLSIGDKVTATVHATRRIAITANHSATHLLHSALREVLGDHVAQKGSLVSENILRFDFSQPEAISKSQLEEIERIVNRKIRENIQVTIETMDIESAKKKGAMALFGEKYGDVVRVVGMTEFSIELCGGTHVQRTGDIGLFKLVSEGAVAAGIRRVEAVTAETAIEWLHNQQKVLQQSAEFLKADSNSLVEKIQQLQDKAKRTEKELQQLKDKLAAQAGSELVKQANKINGVNVVVQKLENVEVKSLRTMVDDLKNQLESAIVVFGTVADEKVNLIVGVTKDLSSKVNAGELVGAMAQQVGGKGGGRADMAMAGGSEPQNLDNALKFAEEWIQAKL</sequence>
<dbReference type="EC" id="6.1.1.7" evidence="1"/>
<dbReference type="EMBL" id="CP000687">
    <property type="protein sequence ID" value="ABY69213.1"/>
    <property type="molecule type" value="Genomic_DNA"/>
</dbReference>
<dbReference type="RefSeq" id="WP_012262899.1">
    <property type="nucleotide sequence ID" value="NC_010278.1"/>
</dbReference>
<dbReference type="SMR" id="B0BNS8"/>
<dbReference type="KEGG" id="apj:APJL_0644"/>
<dbReference type="HOGENOM" id="CLU_004485_1_1_6"/>
<dbReference type="Proteomes" id="UP000008547">
    <property type="component" value="Chromosome"/>
</dbReference>
<dbReference type="GO" id="GO:0005829">
    <property type="term" value="C:cytosol"/>
    <property type="evidence" value="ECO:0007669"/>
    <property type="project" value="TreeGrafter"/>
</dbReference>
<dbReference type="GO" id="GO:0004813">
    <property type="term" value="F:alanine-tRNA ligase activity"/>
    <property type="evidence" value="ECO:0007669"/>
    <property type="project" value="UniProtKB-UniRule"/>
</dbReference>
<dbReference type="GO" id="GO:0002161">
    <property type="term" value="F:aminoacyl-tRNA deacylase activity"/>
    <property type="evidence" value="ECO:0007669"/>
    <property type="project" value="TreeGrafter"/>
</dbReference>
<dbReference type="GO" id="GO:0005524">
    <property type="term" value="F:ATP binding"/>
    <property type="evidence" value="ECO:0007669"/>
    <property type="project" value="UniProtKB-UniRule"/>
</dbReference>
<dbReference type="GO" id="GO:0000049">
    <property type="term" value="F:tRNA binding"/>
    <property type="evidence" value="ECO:0007669"/>
    <property type="project" value="UniProtKB-KW"/>
</dbReference>
<dbReference type="GO" id="GO:0008270">
    <property type="term" value="F:zinc ion binding"/>
    <property type="evidence" value="ECO:0007669"/>
    <property type="project" value="UniProtKB-UniRule"/>
</dbReference>
<dbReference type="GO" id="GO:0006419">
    <property type="term" value="P:alanyl-tRNA aminoacylation"/>
    <property type="evidence" value="ECO:0007669"/>
    <property type="project" value="UniProtKB-UniRule"/>
</dbReference>
<dbReference type="GO" id="GO:0045892">
    <property type="term" value="P:negative regulation of DNA-templated transcription"/>
    <property type="evidence" value="ECO:0007669"/>
    <property type="project" value="TreeGrafter"/>
</dbReference>
<dbReference type="CDD" id="cd00673">
    <property type="entry name" value="AlaRS_core"/>
    <property type="match status" value="1"/>
</dbReference>
<dbReference type="FunFam" id="2.40.30.130:FF:000001">
    <property type="entry name" value="Alanine--tRNA ligase"/>
    <property type="match status" value="1"/>
</dbReference>
<dbReference type="FunFam" id="3.10.310.40:FF:000001">
    <property type="entry name" value="Alanine--tRNA ligase"/>
    <property type="match status" value="1"/>
</dbReference>
<dbReference type="FunFam" id="3.30.54.20:FF:000001">
    <property type="entry name" value="Alanine--tRNA ligase"/>
    <property type="match status" value="1"/>
</dbReference>
<dbReference type="FunFam" id="3.30.930.10:FF:000004">
    <property type="entry name" value="Alanine--tRNA ligase"/>
    <property type="match status" value="1"/>
</dbReference>
<dbReference type="FunFam" id="3.30.980.10:FF:000004">
    <property type="entry name" value="Alanine--tRNA ligase, cytoplasmic"/>
    <property type="match status" value="1"/>
</dbReference>
<dbReference type="Gene3D" id="2.40.30.130">
    <property type="match status" value="1"/>
</dbReference>
<dbReference type="Gene3D" id="3.10.310.40">
    <property type="match status" value="1"/>
</dbReference>
<dbReference type="Gene3D" id="3.30.54.20">
    <property type="match status" value="1"/>
</dbReference>
<dbReference type="Gene3D" id="6.10.250.550">
    <property type="match status" value="1"/>
</dbReference>
<dbReference type="Gene3D" id="3.30.930.10">
    <property type="entry name" value="Bira Bifunctional Protein, Domain 2"/>
    <property type="match status" value="1"/>
</dbReference>
<dbReference type="Gene3D" id="3.30.980.10">
    <property type="entry name" value="Threonyl-trna Synthetase, Chain A, domain 2"/>
    <property type="match status" value="1"/>
</dbReference>
<dbReference type="HAMAP" id="MF_00036_B">
    <property type="entry name" value="Ala_tRNA_synth_B"/>
    <property type="match status" value="1"/>
</dbReference>
<dbReference type="InterPro" id="IPR045864">
    <property type="entry name" value="aa-tRNA-synth_II/BPL/LPL"/>
</dbReference>
<dbReference type="InterPro" id="IPR002318">
    <property type="entry name" value="Ala-tRNA-lgiase_IIc"/>
</dbReference>
<dbReference type="InterPro" id="IPR018162">
    <property type="entry name" value="Ala-tRNA-ligase_IIc_anticod-bd"/>
</dbReference>
<dbReference type="InterPro" id="IPR018165">
    <property type="entry name" value="Ala-tRNA-synth_IIc_core"/>
</dbReference>
<dbReference type="InterPro" id="IPR018164">
    <property type="entry name" value="Ala-tRNA-synth_IIc_N"/>
</dbReference>
<dbReference type="InterPro" id="IPR050058">
    <property type="entry name" value="Ala-tRNA_ligase"/>
</dbReference>
<dbReference type="InterPro" id="IPR023033">
    <property type="entry name" value="Ala_tRNA_ligase_euk/bac"/>
</dbReference>
<dbReference type="InterPro" id="IPR003156">
    <property type="entry name" value="DHHA1_dom"/>
</dbReference>
<dbReference type="InterPro" id="IPR018163">
    <property type="entry name" value="Thr/Ala-tRNA-synth_IIc_edit"/>
</dbReference>
<dbReference type="InterPro" id="IPR009000">
    <property type="entry name" value="Transl_B-barrel_sf"/>
</dbReference>
<dbReference type="InterPro" id="IPR012947">
    <property type="entry name" value="tRNA_SAD"/>
</dbReference>
<dbReference type="NCBIfam" id="TIGR00344">
    <property type="entry name" value="alaS"/>
    <property type="match status" value="1"/>
</dbReference>
<dbReference type="PANTHER" id="PTHR11777:SF9">
    <property type="entry name" value="ALANINE--TRNA LIGASE, CYTOPLASMIC"/>
    <property type="match status" value="1"/>
</dbReference>
<dbReference type="PANTHER" id="PTHR11777">
    <property type="entry name" value="ALANYL-TRNA SYNTHETASE"/>
    <property type="match status" value="1"/>
</dbReference>
<dbReference type="Pfam" id="PF02272">
    <property type="entry name" value="DHHA1"/>
    <property type="match status" value="1"/>
</dbReference>
<dbReference type="Pfam" id="PF01411">
    <property type="entry name" value="tRNA-synt_2c"/>
    <property type="match status" value="1"/>
</dbReference>
<dbReference type="Pfam" id="PF07973">
    <property type="entry name" value="tRNA_SAD"/>
    <property type="match status" value="1"/>
</dbReference>
<dbReference type="PRINTS" id="PR00980">
    <property type="entry name" value="TRNASYNTHALA"/>
</dbReference>
<dbReference type="SMART" id="SM00863">
    <property type="entry name" value="tRNA_SAD"/>
    <property type="match status" value="1"/>
</dbReference>
<dbReference type="SUPFAM" id="SSF55681">
    <property type="entry name" value="Class II aaRS and biotin synthetases"/>
    <property type="match status" value="1"/>
</dbReference>
<dbReference type="SUPFAM" id="SSF101353">
    <property type="entry name" value="Putative anticodon-binding domain of alanyl-tRNA synthetase (AlaRS)"/>
    <property type="match status" value="1"/>
</dbReference>
<dbReference type="SUPFAM" id="SSF55186">
    <property type="entry name" value="ThrRS/AlaRS common domain"/>
    <property type="match status" value="1"/>
</dbReference>
<dbReference type="SUPFAM" id="SSF50447">
    <property type="entry name" value="Translation proteins"/>
    <property type="match status" value="1"/>
</dbReference>
<dbReference type="PROSITE" id="PS50860">
    <property type="entry name" value="AA_TRNA_LIGASE_II_ALA"/>
    <property type="match status" value="1"/>
</dbReference>
<feature type="chain" id="PRO_0000347476" description="Alanine--tRNA ligase">
    <location>
        <begin position="1"/>
        <end position="874"/>
    </location>
</feature>
<feature type="binding site" evidence="1">
    <location>
        <position position="563"/>
    </location>
    <ligand>
        <name>Zn(2+)</name>
        <dbReference type="ChEBI" id="CHEBI:29105"/>
    </ligand>
</feature>
<feature type="binding site" evidence="1">
    <location>
        <position position="567"/>
    </location>
    <ligand>
        <name>Zn(2+)</name>
        <dbReference type="ChEBI" id="CHEBI:29105"/>
    </ligand>
</feature>
<feature type="binding site" evidence="1">
    <location>
        <position position="665"/>
    </location>
    <ligand>
        <name>Zn(2+)</name>
        <dbReference type="ChEBI" id="CHEBI:29105"/>
    </ligand>
</feature>
<feature type="binding site" evidence="1">
    <location>
        <position position="669"/>
    </location>
    <ligand>
        <name>Zn(2+)</name>
        <dbReference type="ChEBI" id="CHEBI:29105"/>
    </ligand>
</feature>
<comment type="function">
    <text evidence="1">Catalyzes the attachment of alanine to tRNA(Ala) in a two-step reaction: alanine is first activated by ATP to form Ala-AMP and then transferred to the acceptor end of tRNA(Ala). Also edits incorrectly charged Ser-tRNA(Ala) and Gly-tRNA(Ala) via its editing domain.</text>
</comment>
<comment type="catalytic activity">
    <reaction evidence="1">
        <text>tRNA(Ala) + L-alanine + ATP = L-alanyl-tRNA(Ala) + AMP + diphosphate</text>
        <dbReference type="Rhea" id="RHEA:12540"/>
        <dbReference type="Rhea" id="RHEA-COMP:9657"/>
        <dbReference type="Rhea" id="RHEA-COMP:9923"/>
        <dbReference type="ChEBI" id="CHEBI:30616"/>
        <dbReference type="ChEBI" id="CHEBI:33019"/>
        <dbReference type="ChEBI" id="CHEBI:57972"/>
        <dbReference type="ChEBI" id="CHEBI:78442"/>
        <dbReference type="ChEBI" id="CHEBI:78497"/>
        <dbReference type="ChEBI" id="CHEBI:456215"/>
        <dbReference type="EC" id="6.1.1.7"/>
    </reaction>
</comment>
<comment type="cofactor">
    <cofactor evidence="1">
        <name>Zn(2+)</name>
        <dbReference type="ChEBI" id="CHEBI:29105"/>
    </cofactor>
    <text evidence="1">Binds 1 zinc ion per subunit.</text>
</comment>
<comment type="subcellular location">
    <subcellularLocation>
        <location evidence="1">Cytoplasm</location>
    </subcellularLocation>
</comment>
<comment type="domain">
    <text evidence="1">Consists of three domains; the N-terminal catalytic domain, the editing domain and the C-terminal C-Ala domain. The editing domain removes incorrectly charged amino acids, while the C-Ala domain, along with tRNA(Ala), serves as a bridge to cooperatively bring together the editing and aminoacylation centers thus stimulating deacylation of misacylated tRNAs.</text>
</comment>
<comment type="similarity">
    <text evidence="1">Belongs to the class-II aminoacyl-tRNA synthetase family.</text>
</comment>
<name>SYA_ACTPJ</name>
<reference key="1">
    <citation type="journal article" date="2008" name="PLoS ONE">
        <title>Genome biology of Actinobacillus pleuropneumoniae JL03, an isolate of serotype 3 prevalent in China.</title>
        <authorList>
            <person name="Xu Z."/>
            <person name="Zhou Y."/>
            <person name="Li L."/>
            <person name="Zhou R."/>
            <person name="Xiao S."/>
            <person name="Wan Y."/>
            <person name="Zhang S."/>
            <person name="Wang K."/>
            <person name="Li W."/>
            <person name="Li L."/>
            <person name="Jin H."/>
            <person name="Kang M."/>
            <person name="Dalai B."/>
            <person name="Li T."/>
            <person name="Liu L."/>
            <person name="Cheng Y."/>
            <person name="Zhang L."/>
            <person name="Xu T."/>
            <person name="Zheng H."/>
            <person name="Pu S."/>
            <person name="Wang B."/>
            <person name="Gu W."/>
            <person name="Zhang X.L."/>
            <person name="Zhu G.-F."/>
            <person name="Wang S."/>
            <person name="Zhao G.-P."/>
            <person name="Chen H."/>
        </authorList>
    </citation>
    <scope>NUCLEOTIDE SEQUENCE [LARGE SCALE GENOMIC DNA]</scope>
    <source>
        <strain>JL03</strain>
    </source>
</reference>
<accession>B0BNS8</accession>
<proteinExistence type="inferred from homology"/>
<protein>
    <recommendedName>
        <fullName evidence="1">Alanine--tRNA ligase</fullName>
        <ecNumber evidence="1">6.1.1.7</ecNumber>
    </recommendedName>
    <alternativeName>
        <fullName evidence="1">Alanyl-tRNA synthetase</fullName>
        <shortName evidence="1">AlaRS</shortName>
    </alternativeName>
</protein>
<keyword id="KW-0030">Aminoacyl-tRNA synthetase</keyword>
<keyword id="KW-0067">ATP-binding</keyword>
<keyword id="KW-0963">Cytoplasm</keyword>
<keyword id="KW-0436">Ligase</keyword>
<keyword id="KW-0479">Metal-binding</keyword>
<keyword id="KW-0547">Nucleotide-binding</keyword>
<keyword id="KW-0648">Protein biosynthesis</keyword>
<keyword id="KW-0694">RNA-binding</keyword>
<keyword id="KW-0820">tRNA-binding</keyword>
<keyword id="KW-0862">Zinc</keyword>
<organism>
    <name type="scientific">Actinobacillus pleuropneumoniae serotype 3 (strain JL03)</name>
    <dbReference type="NCBI Taxonomy" id="434271"/>
    <lineage>
        <taxon>Bacteria</taxon>
        <taxon>Pseudomonadati</taxon>
        <taxon>Pseudomonadota</taxon>
        <taxon>Gammaproteobacteria</taxon>
        <taxon>Pasteurellales</taxon>
        <taxon>Pasteurellaceae</taxon>
        <taxon>Actinobacillus</taxon>
    </lineage>
</organism>